<protein>
    <recommendedName>
        <fullName>Cap-specific mRNA (nucleoside-2'-O-)-methyltransferase 1</fullName>
        <ecNumber>2.1.1.57</ecNumber>
    </recommendedName>
    <alternativeName>
        <fullName>Cap1 2'O-ribose methyltransferase 1</fullName>
        <shortName>MTr1</shortName>
    </alternativeName>
</protein>
<sequence length="398" mass="45037">MRTVEDRSLEFLIRRDREAELPPLASLCCNYFKQRHWRDAFDDEQASLREELWAVKTQLDTIPMEAYTATRNKLFPLALSGEQQQFSNRAGHKLLESMESTGVWMELSKLLCGKSRKRPRDFAFADVCGGPGAFSQALFKAGRKQGWRHLHGYGMTLAGVSGLDWYNSLLNSPQFTCTYGLDGTGDIFKLSNIDCLVSITKAAPMFLVVADGGFSVDFSVANYQETISSRIMYGQWLAALKLLRKGGCCVLKLFDTFSPLSRAVVYLSCFLYSRVHVAKPRHSRVVNSERYLVCVDFLGYPNEAWGRYLDCFYELGFVDNEHVPELMPREWCLQDEIFMADMRDMNMTVATNQMTALQMILNAASAVEEELKAKETTTRTSAESDDSPLSSRESCKDG</sequence>
<accession>A4HQI9</accession>
<proteinExistence type="inferred from homology"/>
<gene>
    <name type="ORF">LbrM35_V2.7020</name>
    <name type="ORF">LbrM_35_7020</name>
</gene>
<organism>
    <name type="scientific">Leishmania braziliensis</name>
    <dbReference type="NCBI Taxonomy" id="5660"/>
    <lineage>
        <taxon>Eukaryota</taxon>
        <taxon>Discoba</taxon>
        <taxon>Euglenozoa</taxon>
        <taxon>Kinetoplastea</taxon>
        <taxon>Metakinetoplastina</taxon>
        <taxon>Trypanosomatida</taxon>
        <taxon>Trypanosomatidae</taxon>
        <taxon>Leishmaniinae</taxon>
        <taxon>Leishmania</taxon>
        <taxon>Leishmania braziliensis species complex</taxon>
    </lineage>
</organism>
<keyword id="KW-0489">Methyltransferase</keyword>
<keyword id="KW-0506">mRNA capping</keyword>
<keyword id="KW-0507">mRNA processing</keyword>
<keyword id="KW-1185">Reference proteome</keyword>
<keyword id="KW-0949">S-adenosyl-L-methionine</keyword>
<keyword id="KW-0808">Transferase</keyword>
<comment type="function">
    <text evidence="1">S-adenosyl-L-methionine-dependent methyltransferase that mediates RNA cap1 2'-O-ribose methylation to the 5'-cap structure of RNAs. Methylates the ribose of the first nucleotide of a m(7)GpppG-capped mRNA to produce m(7)GpppNmp (cap1).</text>
</comment>
<comment type="catalytic activity">
    <reaction>
        <text>a 5'-end (N(7)-methyl 5'-triphosphoguanosine)-ribonucleoside in mRNA + S-adenosyl-L-methionine = a 5'-end (N(7)-methyl 5'-triphosphoguanosine)-(2'-O-methyl-ribonucleoside) in mRNA + S-adenosyl-L-homocysteine + H(+)</text>
        <dbReference type="Rhea" id="RHEA:67020"/>
        <dbReference type="Rhea" id="RHEA-COMP:17167"/>
        <dbReference type="Rhea" id="RHEA-COMP:17168"/>
        <dbReference type="ChEBI" id="CHEBI:15378"/>
        <dbReference type="ChEBI" id="CHEBI:57856"/>
        <dbReference type="ChEBI" id="CHEBI:59789"/>
        <dbReference type="ChEBI" id="CHEBI:156461"/>
        <dbReference type="ChEBI" id="CHEBI:167609"/>
        <dbReference type="EC" id="2.1.1.57"/>
    </reaction>
</comment>
<evidence type="ECO:0000250" key="1"/>
<evidence type="ECO:0000255" key="2">
    <source>
        <dbReference type="PROSITE-ProRule" id="PRU00945"/>
    </source>
</evidence>
<evidence type="ECO:0000256" key="3">
    <source>
        <dbReference type="SAM" id="MobiDB-lite"/>
    </source>
</evidence>
<reference key="1">
    <citation type="journal article" date="2007" name="Nat. Genet.">
        <title>Comparative genomic analysis of three Leishmania species that cause diverse human disease.</title>
        <authorList>
            <person name="Peacock C.S."/>
            <person name="Seeger K."/>
            <person name="Harris D."/>
            <person name="Murphy L."/>
            <person name="Ruiz J.C."/>
            <person name="Quail M.A."/>
            <person name="Peters N."/>
            <person name="Adlem E."/>
            <person name="Tivey A."/>
            <person name="Aslett M."/>
            <person name="Kerhornou A."/>
            <person name="Ivens A."/>
            <person name="Fraser A."/>
            <person name="Rajandream M.-A."/>
            <person name="Carver T."/>
            <person name="Norbertczak H."/>
            <person name="Chillingworth T."/>
            <person name="Hance Z."/>
            <person name="Jagels K."/>
            <person name="Moule S."/>
            <person name="Ormond D."/>
            <person name="Rutter S."/>
            <person name="Sqaures R."/>
            <person name="Whitehead S."/>
            <person name="Rabbinowitsch E."/>
            <person name="Arrowsmith C."/>
            <person name="White B."/>
            <person name="Thurston S."/>
            <person name="Bringaud F."/>
            <person name="Baldauf S.L."/>
            <person name="Faulconbridge A."/>
            <person name="Jeffares D."/>
            <person name="Depledge D.P."/>
            <person name="Oyola S.O."/>
            <person name="Hilley J.D."/>
            <person name="Brito L.O."/>
            <person name="Tosi L.R.O."/>
            <person name="Barrell B."/>
            <person name="Cruz A.K."/>
            <person name="Mottram J.C."/>
            <person name="Smith D.F."/>
            <person name="Berriman M."/>
        </authorList>
    </citation>
    <scope>NUCLEOTIDE SEQUENCE [LARGE SCALE GENOMIC DNA]</scope>
    <source>
        <strain>MHOM/BR/75/M2904</strain>
    </source>
</reference>
<feature type="chain" id="PRO_0000399805" description="Cap-specific mRNA (nucleoside-2'-O-)-methyltransferase 1">
    <location>
        <begin position="1"/>
        <end position="398"/>
    </location>
</feature>
<feature type="domain" description="RrmJ-type SAM-dependent 2'-O-MTase" evidence="2">
    <location>
        <begin position="85"/>
        <end position="298"/>
    </location>
</feature>
<feature type="region of interest" description="Disordered" evidence="3">
    <location>
        <begin position="371"/>
        <end position="398"/>
    </location>
</feature>
<feature type="active site" description="Proton acceptor" evidence="2">
    <location>
        <position position="252"/>
    </location>
</feature>
<feature type="binding site" evidence="2">
    <location>
        <position position="132"/>
    </location>
    <ligand>
        <name>S-adenosyl-L-methionine</name>
        <dbReference type="ChEBI" id="CHEBI:59789"/>
    </ligand>
</feature>
<feature type="binding site" evidence="2">
    <location>
        <position position="211"/>
    </location>
    <ligand>
        <name>S-adenosyl-L-methionine</name>
        <dbReference type="ChEBI" id="CHEBI:59789"/>
    </ligand>
</feature>
<dbReference type="EC" id="2.1.1.57"/>
<dbReference type="EMBL" id="FR799010">
    <property type="protein sequence ID" value="CAM44455.1"/>
    <property type="molecule type" value="Genomic_DNA"/>
</dbReference>
<dbReference type="RefSeq" id="XP_001569314.1">
    <property type="nucleotide sequence ID" value="XM_001569264.1"/>
</dbReference>
<dbReference type="SMR" id="A4HQI9"/>
<dbReference type="GeneID" id="5420298"/>
<dbReference type="KEGG" id="lbz:LBRM_35_7020"/>
<dbReference type="VEuPathDB" id="TriTrypDB:LbrM.35.7020"/>
<dbReference type="InParanoid" id="A4HQI9"/>
<dbReference type="OMA" id="ESTGVWM"/>
<dbReference type="Proteomes" id="UP000007258">
    <property type="component" value="Chromosome 36"/>
</dbReference>
<dbReference type="GO" id="GO:0005737">
    <property type="term" value="C:cytoplasm"/>
    <property type="evidence" value="ECO:0007669"/>
    <property type="project" value="TreeGrafter"/>
</dbReference>
<dbReference type="GO" id="GO:0005634">
    <property type="term" value="C:nucleus"/>
    <property type="evidence" value="ECO:0000250"/>
    <property type="project" value="UniProtKB"/>
</dbReference>
<dbReference type="GO" id="GO:0004483">
    <property type="term" value="F:mRNA (nucleoside-2'-O-)-methyltransferase activity"/>
    <property type="evidence" value="ECO:0000250"/>
    <property type="project" value="UniProtKB"/>
</dbReference>
<dbReference type="GO" id="GO:0006370">
    <property type="term" value="P:7-methylguanosine mRNA capping"/>
    <property type="evidence" value="ECO:0000250"/>
    <property type="project" value="UniProtKB"/>
</dbReference>
<dbReference type="GO" id="GO:0032259">
    <property type="term" value="P:methylation"/>
    <property type="evidence" value="ECO:0007669"/>
    <property type="project" value="UniProtKB-KW"/>
</dbReference>
<dbReference type="GO" id="GO:0016556">
    <property type="term" value="P:mRNA modification"/>
    <property type="evidence" value="ECO:0000250"/>
    <property type="project" value="UniProtKB"/>
</dbReference>
<dbReference type="GO" id="GO:0006397">
    <property type="term" value="P:mRNA processing"/>
    <property type="evidence" value="ECO:0000250"/>
    <property type="project" value="UniProtKB"/>
</dbReference>
<dbReference type="FunFam" id="3.40.50.12760:FF:000005">
    <property type="entry name" value="Methyltransferase, putative"/>
    <property type="match status" value="1"/>
</dbReference>
<dbReference type="Gene3D" id="3.40.50.12760">
    <property type="match status" value="1"/>
</dbReference>
<dbReference type="InterPro" id="IPR050851">
    <property type="entry name" value="mRNA_Cap_2O-Ribose_MeTrfase"/>
</dbReference>
<dbReference type="InterPro" id="IPR002877">
    <property type="entry name" value="RNA_MeTrfase_FtsJ_dom"/>
</dbReference>
<dbReference type="InterPro" id="IPR025816">
    <property type="entry name" value="RrmJ-type_MeTrfase"/>
</dbReference>
<dbReference type="InterPro" id="IPR029063">
    <property type="entry name" value="SAM-dependent_MTases_sf"/>
</dbReference>
<dbReference type="PANTHER" id="PTHR16121:SF0">
    <property type="entry name" value="CAP-SPECIFIC MRNA (NUCLEOSIDE-2'-O-)-METHYLTRANSFERASE 1"/>
    <property type="match status" value="1"/>
</dbReference>
<dbReference type="PANTHER" id="PTHR16121">
    <property type="entry name" value="CAP-SPECIFIC MRNA (NUCLEOSIDE-2'-O-)-METHYLTRANSFERASE 1-RELATED"/>
    <property type="match status" value="1"/>
</dbReference>
<dbReference type="Pfam" id="PF01728">
    <property type="entry name" value="FtsJ"/>
    <property type="match status" value="1"/>
</dbReference>
<dbReference type="SUPFAM" id="SSF53335">
    <property type="entry name" value="S-adenosyl-L-methionine-dependent methyltransferases"/>
    <property type="match status" value="1"/>
</dbReference>
<dbReference type="PROSITE" id="PS51613">
    <property type="entry name" value="SAM_MT_RRMJ"/>
    <property type="match status" value="1"/>
</dbReference>
<name>MTR1_LEIBR</name>